<feature type="chain" id="PRO_1000024789" description="Ribonuclease PH">
    <location>
        <begin position="1"/>
        <end position="243"/>
    </location>
</feature>
<feature type="binding site" evidence="1">
    <location>
        <position position="91"/>
    </location>
    <ligand>
        <name>phosphate</name>
        <dbReference type="ChEBI" id="CHEBI:43474"/>
        <note>substrate</note>
    </ligand>
</feature>
<feature type="binding site" evidence="1">
    <location>
        <begin position="129"/>
        <end position="131"/>
    </location>
    <ligand>
        <name>phosphate</name>
        <dbReference type="ChEBI" id="CHEBI:43474"/>
        <note>substrate</note>
    </ligand>
</feature>
<sequence>MTNSSLRPSGRRADQLRDVRITRHYTKHAEGAVLVEFGDTKVICTASVAERVPEFLRERGQGWLTAEYGMLPRATHTRSDREAARGKQTGRTQEIQRLIGRALRAVFDLNALGPRTLHLDCDVIQADGGTRTASITGAFVAAHDAVTKLVAAGRIARSPITDYVAAISVGMFGGTPVLDLDYDEDSACDTDMNVVMTGAGGFVEVQGTAEGAPFSRTEMNALLDLAQAGIGELVRLQRAALEA</sequence>
<keyword id="KW-0548">Nucleotidyltransferase</keyword>
<keyword id="KW-0694">RNA-binding</keyword>
<keyword id="KW-0698">rRNA processing</keyword>
<keyword id="KW-0808">Transferase</keyword>
<keyword id="KW-0819">tRNA processing</keyword>
<keyword id="KW-0820">tRNA-binding</keyword>
<dbReference type="EC" id="2.7.7.56" evidence="1"/>
<dbReference type="EMBL" id="CP000570">
    <property type="protein sequence ID" value="ABN81555.1"/>
    <property type="molecule type" value="Genomic_DNA"/>
</dbReference>
<dbReference type="RefSeq" id="WP_009973947.1">
    <property type="nucleotide sequence ID" value="NC_009074.1"/>
</dbReference>
<dbReference type="SMR" id="A3NC95"/>
<dbReference type="KEGG" id="bpd:BURPS668_2951"/>
<dbReference type="HOGENOM" id="CLU_050858_0_0_4"/>
<dbReference type="GO" id="GO:0000175">
    <property type="term" value="F:3'-5'-RNA exonuclease activity"/>
    <property type="evidence" value="ECO:0007669"/>
    <property type="project" value="UniProtKB-UniRule"/>
</dbReference>
<dbReference type="GO" id="GO:0000049">
    <property type="term" value="F:tRNA binding"/>
    <property type="evidence" value="ECO:0007669"/>
    <property type="project" value="UniProtKB-UniRule"/>
</dbReference>
<dbReference type="GO" id="GO:0009022">
    <property type="term" value="F:tRNA nucleotidyltransferase activity"/>
    <property type="evidence" value="ECO:0007669"/>
    <property type="project" value="UniProtKB-UniRule"/>
</dbReference>
<dbReference type="GO" id="GO:0016075">
    <property type="term" value="P:rRNA catabolic process"/>
    <property type="evidence" value="ECO:0007669"/>
    <property type="project" value="UniProtKB-UniRule"/>
</dbReference>
<dbReference type="GO" id="GO:0006364">
    <property type="term" value="P:rRNA processing"/>
    <property type="evidence" value="ECO:0007669"/>
    <property type="project" value="UniProtKB-KW"/>
</dbReference>
<dbReference type="GO" id="GO:0008033">
    <property type="term" value="P:tRNA processing"/>
    <property type="evidence" value="ECO:0007669"/>
    <property type="project" value="UniProtKB-UniRule"/>
</dbReference>
<dbReference type="CDD" id="cd11362">
    <property type="entry name" value="RNase_PH_bact"/>
    <property type="match status" value="1"/>
</dbReference>
<dbReference type="FunFam" id="3.30.230.70:FF:000003">
    <property type="entry name" value="Ribonuclease PH"/>
    <property type="match status" value="1"/>
</dbReference>
<dbReference type="Gene3D" id="3.30.230.70">
    <property type="entry name" value="GHMP Kinase, N-terminal domain"/>
    <property type="match status" value="1"/>
</dbReference>
<dbReference type="HAMAP" id="MF_00564">
    <property type="entry name" value="RNase_PH"/>
    <property type="match status" value="1"/>
</dbReference>
<dbReference type="InterPro" id="IPR001247">
    <property type="entry name" value="ExoRNase_PH_dom1"/>
</dbReference>
<dbReference type="InterPro" id="IPR015847">
    <property type="entry name" value="ExoRNase_PH_dom2"/>
</dbReference>
<dbReference type="InterPro" id="IPR036345">
    <property type="entry name" value="ExoRNase_PH_dom2_sf"/>
</dbReference>
<dbReference type="InterPro" id="IPR027408">
    <property type="entry name" value="PNPase/RNase_PH_dom_sf"/>
</dbReference>
<dbReference type="InterPro" id="IPR020568">
    <property type="entry name" value="Ribosomal_Su5_D2-typ_SF"/>
</dbReference>
<dbReference type="InterPro" id="IPR050080">
    <property type="entry name" value="RNase_PH"/>
</dbReference>
<dbReference type="InterPro" id="IPR002381">
    <property type="entry name" value="RNase_PH_bac-type"/>
</dbReference>
<dbReference type="InterPro" id="IPR018336">
    <property type="entry name" value="RNase_PH_CS"/>
</dbReference>
<dbReference type="NCBIfam" id="TIGR01966">
    <property type="entry name" value="RNasePH"/>
    <property type="match status" value="1"/>
</dbReference>
<dbReference type="PANTHER" id="PTHR11953">
    <property type="entry name" value="EXOSOME COMPLEX COMPONENT"/>
    <property type="match status" value="1"/>
</dbReference>
<dbReference type="PANTHER" id="PTHR11953:SF0">
    <property type="entry name" value="EXOSOME COMPLEX COMPONENT RRP41"/>
    <property type="match status" value="1"/>
</dbReference>
<dbReference type="Pfam" id="PF01138">
    <property type="entry name" value="RNase_PH"/>
    <property type="match status" value="1"/>
</dbReference>
<dbReference type="Pfam" id="PF03725">
    <property type="entry name" value="RNase_PH_C"/>
    <property type="match status" value="1"/>
</dbReference>
<dbReference type="SUPFAM" id="SSF55666">
    <property type="entry name" value="Ribonuclease PH domain 2-like"/>
    <property type="match status" value="1"/>
</dbReference>
<dbReference type="SUPFAM" id="SSF54211">
    <property type="entry name" value="Ribosomal protein S5 domain 2-like"/>
    <property type="match status" value="1"/>
</dbReference>
<dbReference type="PROSITE" id="PS01277">
    <property type="entry name" value="RIBONUCLEASE_PH"/>
    <property type="match status" value="1"/>
</dbReference>
<accession>A3NC95</accession>
<proteinExistence type="inferred from homology"/>
<name>RNPH_BURP6</name>
<reference key="1">
    <citation type="journal article" date="2010" name="Genome Biol. Evol.">
        <title>Continuing evolution of Burkholderia mallei through genome reduction and large-scale rearrangements.</title>
        <authorList>
            <person name="Losada L."/>
            <person name="Ronning C.M."/>
            <person name="DeShazer D."/>
            <person name="Woods D."/>
            <person name="Fedorova N."/>
            <person name="Kim H.S."/>
            <person name="Shabalina S.A."/>
            <person name="Pearson T.R."/>
            <person name="Brinkac L."/>
            <person name="Tan P."/>
            <person name="Nandi T."/>
            <person name="Crabtree J."/>
            <person name="Badger J."/>
            <person name="Beckstrom-Sternberg S."/>
            <person name="Saqib M."/>
            <person name="Schutzer S.E."/>
            <person name="Keim P."/>
            <person name="Nierman W.C."/>
        </authorList>
    </citation>
    <scope>NUCLEOTIDE SEQUENCE [LARGE SCALE GENOMIC DNA]</scope>
    <source>
        <strain>668</strain>
    </source>
</reference>
<organism>
    <name type="scientific">Burkholderia pseudomallei (strain 668)</name>
    <dbReference type="NCBI Taxonomy" id="320373"/>
    <lineage>
        <taxon>Bacteria</taxon>
        <taxon>Pseudomonadati</taxon>
        <taxon>Pseudomonadota</taxon>
        <taxon>Betaproteobacteria</taxon>
        <taxon>Burkholderiales</taxon>
        <taxon>Burkholderiaceae</taxon>
        <taxon>Burkholderia</taxon>
        <taxon>pseudomallei group</taxon>
    </lineage>
</organism>
<gene>
    <name evidence="1" type="primary">rph</name>
    <name type="ordered locus">BURPS668_2951</name>
</gene>
<protein>
    <recommendedName>
        <fullName evidence="1">Ribonuclease PH</fullName>
        <shortName evidence="1">RNase PH</shortName>
        <ecNumber evidence="1">2.7.7.56</ecNumber>
    </recommendedName>
    <alternativeName>
        <fullName evidence="1">tRNA nucleotidyltransferase</fullName>
    </alternativeName>
</protein>
<comment type="function">
    <text evidence="1">Phosphorolytic 3'-5' exoribonuclease that plays an important role in tRNA 3'-end maturation. Removes nucleotide residues following the 3'-CCA terminus of tRNAs; can also add nucleotides to the ends of RNA molecules by using nucleoside diphosphates as substrates, but this may not be physiologically important. Probably plays a role in initiation of 16S rRNA degradation (leading to ribosome degradation) during starvation.</text>
</comment>
<comment type="catalytic activity">
    <reaction evidence="1">
        <text>tRNA(n+1) + phosphate = tRNA(n) + a ribonucleoside 5'-diphosphate</text>
        <dbReference type="Rhea" id="RHEA:10628"/>
        <dbReference type="Rhea" id="RHEA-COMP:17343"/>
        <dbReference type="Rhea" id="RHEA-COMP:17344"/>
        <dbReference type="ChEBI" id="CHEBI:43474"/>
        <dbReference type="ChEBI" id="CHEBI:57930"/>
        <dbReference type="ChEBI" id="CHEBI:173114"/>
        <dbReference type="EC" id="2.7.7.56"/>
    </reaction>
</comment>
<comment type="subunit">
    <text evidence="1">Homohexameric ring arranged as a trimer of dimers.</text>
</comment>
<comment type="similarity">
    <text evidence="1">Belongs to the RNase PH family.</text>
</comment>
<evidence type="ECO:0000255" key="1">
    <source>
        <dbReference type="HAMAP-Rule" id="MF_00564"/>
    </source>
</evidence>